<comment type="function">
    <text evidence="1">Cell wall formation.</text>
</comment>
<comment type="catalytic activity">
    <reaction evidence="1">
        <text>UDP-N-acetyl-alpha-D-muramate + L-alanine + ATP = UDP-N-acetyl-alpha-D-muramoyl-L-alanine + ADP + phosphate + H(+)</text>
        <dbReference type="Rhea" id="RHEA:23372"/>
        <dbReference type="ChEBI" id="CHEBI:15378"/>
        <dbReference type="ChEBI" id="CHEBI:30616"/>
        <dbReference type="ChEBI" id="CHEBI:43474"/>
        <dbReference type="ChEBI" id="CHEBI:57972"/>
        <dbReference type="ChEBI" id="CHEBI:70757"/>
        <dbReference type="ChEBI" id="CHEBI:83898"/>
        <dbReference type="ChEBI" id="CHEBI:456216"/>
        <dbReference type="EC" id="6.3.2.8"/>
    </reaction>
</comment>
<comment type="pathway">
    <text evidence="1">Cell wall biogenesis; peptidoglycan biosynthesis.</text>
</comment>
<comment type="subcellular location">
    <subcellularLocation>
        <location evidence="1">Cytoplasm</location>
    </subcellularLocation>
</comment>
<comment type="similarity">
    <text evidence="1">Belongs to the MurCDEF family.</text>
</comment>
<feature type="chain" id="PRO_0000182110" description="UDP-N-acetylmuramate--L-alanine ligase">
    <location>
        <begin position="1"/>
        <end position="469"/>
    </location>
</feature>
<feature type="binding site" evidence="1">
    <location>
        <begin position="122"/>
        <end position="128"/>
    </location>
    <ligand>
        <name>ATP</name>
        <dbReference type="ChEBI" id="CHEBI:30616"/>
    </ligand>
</feature>
<keyword id="KW-0067">ATP-binding</keyword>
<keyword id="KW-0131">Cell cycle</keyword>
<keyword id="KW-0132">Cell division</keyword>
<keyword id="KW-0133">Cell shape</keyword>
<keyword id="KW-0961">Cell wall biogenesis/degradation</keyword>
<keyword id="KW-0963">Cytoplasm</keyword>
<keyword id="KW-0436">Ligase</keyword>
<keyword id="KW-0547">Nucleotide-binding</keyword>
<keyword id="KW-0573">Peptidoglycan synthesis</keyword>
<name>MURC_LEGPL</name>
<gene>
    <name evidence="1" type="primary">murC</name>
    <name type="ordered locus">lpl2537</name>
</gene>
<organism>
    <name type="scientific">Legionella pneumophila (strain Lens)</name>
    <dbReference type="NCBI Taxonomy" id="297245"/>
    <lineage>
        <taxon>Bacteria</taxon>
        <taxon>Pseudomonadati</taxon>
        <taxon>Pseudomonadota</taxon>
        <taxon>Gammaproteobacteria</taxon>
        <taxon>Legionellales</taxon>
        <taxon>Legionellaceae</taxon>
        <taxon>Legionella</taxon>
    </lineage>
</organism>
<proteinExistence type="inferred from homology"/>
<accession>Q5WTI7</accession>
<evidence type="ECO:0000255" key="1">
    <source>
        <dbReference type="HAMAP-Rule" id="MF_00046"/>
    </source>
</evidence>
<sequence length="469" mass="51955">MNNSEQFLSPRMGRVEQIHFVGIGGAGMCGIAEVLHNQGYRITGSDLGESGTVQRLRSLGIQVYIGHRLENIKGADVVVRSSAVDFNNPEIVAARELMIPVIPRAAMLAELMRFRHGIAIAGTHGKTTTTSLVSSLLAEGGLDPSFVIGGKLNSCGANAQLGKSAYFVVEADESDASFLFLKPMMAVVTNIDADHMDTYEGDFEKLRTTFLEFLHHLPFYGLAVVCLEDEEICRILPAIQRPTLTYGFKEEAHYRAINWTQKGMLSEFVVVRPAPHKQLTIQFQYPGRHNVLNALASIAIATELGVDDDSIVRGLQKFQGVGRRFQMLGEKQFEKGAAIIVDDYGHHPQEILSTIDAFRRVWPERRLVHVFQPHRYTRTQSLHRQFVDALSLSDELLLMDIYAAGETAIPGVTSENLANEIRSRDKRVTIVSEQSLKATLDEFIKDGDVILMQGAGSIGQMAVNLMKNM</sequence>
<dbReference type="EC" id="6.3.2.8" evidence="1"/>
<dbReference type="EMBL" id="CR628337">
    <property type="protein sequence ID" value="CAH16777.1"/>
    <property type="molecule type" value="Genomic_DNA"/>
</dbReference>
<dbReference type="RefSeq" id="WP_011216489.1">
    <property type="nucleotide sequence ID" value="NC_006369.1"/>
</dbReference>
<dbReference type="SMR" id="Q5WTI7"/>
<dbReference type="KEGG" id="lpf:lpl2537"/>
<dbReference type="LegioList" id="lpl2537"/>
<dbReference type="HOGENOM" id="CLU_028104_2_2_6"/>
<dbReference type="UniPathway" id="UPA00219"/>
<dbReference type="Proteomes" id="UP000002517">
    <property type="component" value="Chromosome"/>
</dbReference>
<dbReference type="GO" id="GO:0005737">
    <property type="term" value="C:cytoplasm"/>
    <property type="evidence" value="ECO:0007669"/>
    <property type="project" value="UniProtKB-SubCell"/>
</dbReference>
<dbReference type="GO" id="GO:0005524">
    <property type="term" value="F:ATP binding"/>
    <property type="evidence" value="ECO:0007669"/>
    <property type="project" value="UniProtKB-UniRule"/>
</dbReference>
<dbReference type="GO" id="GO:0008763">
    <property type="term" value="F:UDP-N-acetylmuramate-L-alanine ligase activity"/>
    <property type="evidence" value="ECO:0007669"/>
    <property type="project" value="UniProtKB-UniRule"/>
</dbReference>
<dbReference type="GO" id="GO:0051301">
    <property type="term" value="P:cell division"/>
    <property type="evidence" value="ECO:0007669"/>
    <property type="project" value="UniProtKB-KW"/>
</dbReference>
<dbReference type="GO" id="GO:0071555">
    <property type="term" value="P:cell wall organization"/>
    <property type="evidence" value="ECO:0007669"/>
    <property type="project" value="UniProtKB-KW"/>
</dbReference>
<dbReference type="GO" id="GO:0009252">
    <property type="term" value="P:peptidoglycan biosynthetic process"/>
    <property type="evidence" value="ECO:0007669"/>
    <property type="project" value="UniProtKB-UniRule"/>
</dbReference>
<dbReference type="GO" id="GO:0008360">
    <property type="term" value="P:regulation of cell shape"/>
    <property type="evidence" value="ECO:0007669"/>
    <property type="project" value="UniProtKB-KW"/>
</dbReference>
<dbReference type="FunFam" id="3.40.1190.10:FF:000001">
    <property type="entry name" value="UDP-N-acetylmuramate--L-alanine ligase"/>
    <property type="match status" value="1"/>
</dbReference>
<dbReference type="Gene3D" id="3.90.190.20">
    <property type="entry name" value="Mur ligase, C-terminal domain"/>
    <property type="match status" value="1"/>
</dbReference>
<dbReference type="Gene3D" id="3.40.1190.10">
    <property type="entry name" value="Mur-like, catalytic domain"/>
    <property type="match status" value="1"/>
</dbReference>
<dbReference type="Gene3D" id="3.40.50.720">
    <property type="entry name" value="NAD(P)-binding Rossmann-like Domain"/>
    <property type="match status" value="1"/>
</dbReference>
<dbReference type="HAMAP" id="MF_00046">
    <property type="entry name" value="MurC"/>
    <property type="match status" value="1"/>
</dbReference>
<dbReference type="InterPro" id="IPR036565">
    <property type="entry name" value="Mur-like_cat_sf"/>
</dbReference>
<dbReference type="InterPro" id="IPR004101">
    <property type="entry name" value="Mur_ligase_C"/>
</dbReference>
<dbReference type="InterPro" id="IPR036615">
    <property type="entry name" value="Mur_ligase_C_dom_sf"/>
</dbReference>
<dbReference type="InterPro" id="IPR013221">
    <property type="entry name" value="Mur_ligase_cen"/>
</dbReference>
<dbReference type="InterPro" id="IPR000713">
    <property type="entry name" value="Mur_ligase_N"/>
</dbReference>
<dbReference type="InterPro" id="IPR050061">
    <property type="entry name" value="MurCDEF_pg_biosynth"/>
</dbReference>
<dbReference type="InterPro" id="IPR005758">
    <property type="entry name" value="UDP-N-AcMur_Ala_ligase_MurC"/>
</dbReference>
<dbReference type="NCBIfam" id="TIGR01082">
    <property type="entry name" value="murC"/>
    <property type="match status" value="1"/>
</dbReference>
<dbReference type="PANTHER" id="PTHR43445:SF3">
    <property type="entry name" value="UDP-N-ACETYLMURAMATE--L-ALANINE LIGASE"/>
    <property type="match status" value="1"/>
</dbReference>
<dbReference type="PANTHER" id="PTHR43445">
    <property type="entry name" value="UDP-N-ACETYLMURAMATE--L-ALANINE LIGASE-RELATED"/>
    <property type="match status" value="1"/>
</dbReference>
<dbReference type="Pfam" id="PF01225">
    <property type="entry name" value="Mur_ligase"/>
    <property type="match status" value="1"/>
</dbReference>
<dbReference type="Pfam" id="PF02875">
    <property type="entry name" value="Mur_ligase_C"/>
    <property type="match status" value="1"/>
</dbReference>
<dbReference type="Pfam" id="PF08245">
    <property type="entry name" value="Mur_ligase_M"/>
    <property type="match status" value="1"/>
</dbReference>
<dbReference type="SUPFAM" id="SSF51984">
    <property type="entry name" value="MurCD N-terminal domain"/>
    <property type="match status" value="1"/>
</dbReference>
<dbReference type="SUPFAM" id="SSF53623">
    <property type="entry name" value="MurD-like peptide ligases, catalytic domain"/>
    <property type="match status" value="1"/>
</dbReference>
<dbReference type="SUPFAM" id="SSF53244">
    <property type="entry name" value="MurD-like peptide ligases, peptide-binding domain"/>
    <property type="match status" value="1"/>
</dbReference>
<reference key="1">
    <citation type="journal article" date="2004" name="Nat. Genet.">
        <title>Evidence in the Legionella pneumophila genome for exploitation of host cell functions and high genome plasticity.</title>
        <authorList>
            <person name="Cazalet C."/>
            <person name="Rusniok C."/>
            <person name="Brueggemann H."/>
            <person name="Zidane N."/>
            <person name="Magnier A."/>
            <person name="Ma L."/>
            <person name="Tichit M."/>
            <person name="Jarraud S."/>
            <person name="Bouchier C."/>
            <person name="Vandenesch F."/>
            <person name="Kunst F."/>
            <person name="Etienne J."/>
            <person name="Glaser P."/>
            <person name="Buchrieser C."/>
        </authorList>
    </citation>
    <scope>NUCLEOTIDE SEQUENCE [LARGE SCALE GENOMIC DNA]</scope>
    <source>
        <strain>Lens</strain>
    </source>
</reference>
<protein>
    <recommendedName>
        <fullName evidence="1">UDP-N-acetylmuramate--L-alanine ligase</fullName>
        <ecNumber evidence="1">6.3.2.8</ecNumber>
    </recommendedName>
    <alternativeName>
        <fullName evidence="1">UDP-N-acetylmuramoyl-L-alanine synthetase</fullName>
    </alternativeName>
</protein>